<evidence type="ECO:0000250" key="1"/>
<evidence type="ECO:0000250" key="2">
    <source>
        <dbReference type="UniProtKB" id="P68431"/>
    </source>
</evidence>
<evidence type="ECO:0000250" key="3">
    <source>
        <dbReference type="UniProtKB" id="P68433"/>
    </source>
</evidence>
<evidence type="ECO:0000250" key="4">
    <source>
        <dbReference type="UniProtKB" id="P84227"/>
    </source>
</evidence>
<evidence type="ECO:0000250" key="5">
    <source>
        <dbReference type="UniProtKB" id="P84228"/>
    </source>
</evidence>
<evidence type="ECO:0000250" key="6">
    <source>
        <dbReference type="UniProtKB" id="P84243"/>
    </source>
</evidence>
<evidence type="ECO:0000250" key="7">
    <source>
        <dbReference type="UniProtKB" id="P84245"/>
    </source>
</evidence>
<evidence type="ECO:0000250" key="8">
    <source>
        <dbReference type="UniProtKB" id="Q71DI3"/>
    </source>
</evidence>
<evidence type="ECO:0000256" key="9">
    <source>
        <dbReference type="SAM" id="MobiDB-lite"/>
    </source>
</evidence>
<evidence type="ECO:0000305" key="10"/>
<sequence>MARTKQTARKSTGGKAPRKQLATKAARKSAPATGGVKKPHRYRPGTVALREIRRYQKSTELLIRKLPFQRLVREIAQDFKTDLRFQSSAVMALQEASEAYLVGLFEDTNLCAIHAKRVTIMPKDIQLARRIRGERA</sequence>
<proteinExistence type="evidence at transcript level"/>
<accession>P84230</accession>
<accession>P02295</accession>
<accession>P02297</accession>
<accession>P16105</accession>
<accession>P17269</accession>
<accession>P17320</accession>
<feature type="initiator methionine" description="Removed" evidence="4">
    <location>
        <position position="1"/>
    </location>
</feature>
<feature type="chain" id="PRO_0000221258" description="Histone H3.2">
    <location>
        <begin position="2"/>
        <end position="136"/>
    </location>
</feature>
<feature type="region of interest" description="Disordered" evidence="9">
    <location>
        <begin position="1"/>
        <end position="43"/>
    </location>
</feature>
<feature type="modified residue" description="Asymmetric dimethylarginine; by PRMT6; alternate" evidence="8">
    <location>
        <position position="3"/>
    </location>
</feature>
<feature type="modified residue" description="Citrulline; alternate" evidence="8">
    <location>
        <position position="3"/>
    </location>
</feature>
<feature type="modified residue" description="Phosphothreonine; by HASPIN and VRK1" evidence="8">
    <location>
        <position position="4"/>
    </location>
</feature>
<feature type="modified residue" description="Allysine; alternate" evidence="8">
    <location>
        <position position="5"/>
    </location>
</feature>
<feature type="modified residue" description="N6,N6,N6-trimethyllysine; alternate" evidence="8">
    <location>
        <position position="5"/>
    </location>
</feature>
<feature type="modified residue" description="N6,N6-dimethyllysine; alternate" evidence="8">
    <location>
        <position position="5"/>
    </location>
</feature>
<feature type="modified residue" description="N6-(2-hydroxyisobutyryl)lysine; alternate" evidence="2">
    <location>
        <position position="5"/>
    </location>
</feature>
<feature type="modified residue" description="N6-acetyllysine; alternate" evidence="8">
    <location>
        <position position="5"/>
    </location>
</feature>
<feature type="modified residue" description="N6-crotonyllysine; alternate" evidence="8">
    <location>
        <position position="5"/>
    </location>
</feature>
<feature type="modified residue" description="N6-methyllysine; alternate" evidence="8">
    <location>
        <position position="5"/>
    </location>
</feature>
<feature type="modified residue" description="5-glutamyl dopamine; alternate" evidence="8">
    <location>
        <position position="6"/>
    </location>
</feature>
<feature type="modified residue" description="5-glutamyl serotonin; alternate" evidence="8">
    <location>
        <position position="6"/>
    </location>
</feature>
<feature type="modified residue" description="Phosphothreonine; by PKC" evidence="8">
    <location>
        <position position="7"/>
    </location>
</feature>
<feature type="modified residue" description="Citrulline; alternate" evidence="8">
    <location>
        <position position="9"/>
    </location>
</feature>
<feature type="modified residue" description="Symmetric dimethylarginine; by PRMT5; alternate" evidence="1">
    <location>
        <position position="9"/>
    </location>
</feature>
<feature type="modified residue" description="N6,N6,N6-trimethyllysine; alternate" evidence="8">
    <location>
        <position position="10"/>
    </location>
</feature>
<feature type="modified residue" description="N6,N6-dimethyllysine; alternate" evidence="8">
    <location>
        <position position="10"/>
    </location>
</feature>
<feature type="modified residue" description="N6-(2-hydroxyisobutyryl)lysine; alternate" evidence="2">
    <location>
        <position position="10"/>
    </location>
</feature>
<feature type="modified residue" description="N6-acetyllysine; alternate" evidence="8">
    <location>
        <position position="10"/>
    </location>
</feature>
<feature type="modified residue" description="N6-crotonyllysine; alternate" evidence="8">
    <location>
        <position position="10"/>
    </location>
</feature>
<feature type="modified residue" description="N6-lactoyllysine; alternate" evidence="8">
    <location>
        <position position="10"/>
    </location>
</feature>
<feature type="modified residue" description="N6-methyllysine; alternate" evidence="8">
    <location>
        <position position="10"/>
    </location>
</feature>
<feature type="modified residue" description="ADP-ribosylserine; alternate" evidence="2">
    <location>
        <position position="11"/>
    </location>
</feature>
<feature type="modified residue" description="Phosphoserine; alternate; by AURKB, AURKC, RPS6KA3, RPS6KA4 and RPS6KA5" evidence="8">
    <location>
        <position position="11"/>
    </location>
</feature>
<feature type="modified residue" description="Phosphothreonine; by PKC" evidence="8">
    <location>
        <position position="12"/>
    </location>
</feature>
<feature type="modified residue" description="N6-(2-hydroxyisobutyryl)lysine; alternate" evidence="2">
    <location>
        <position position="15"/>
    </location>
</feature>
<feature type="modified residue" description="N6-acetyllysine" evidence="8">
    <location>
        <position position="15"/>
    </location>
</feature>
<feature type="modified residue" description="N6-glutaryllysine; alternate" evidence="8">
    <location>
        <position position="15"/>
    </location>
</feature>
<feature type="modified residue" description="N6-lactoyllysine; alternate" evidence="5">
    <location>
        <position position="15"/>
    </location>
</feature>
<feature type="modified residue" description="Asymmetric dimethylarginine; by CARM1; alternate" evidence="8">
    <location>
        <position position="18"/>
    </location>
</feature>
<feature type="modified residue" description="Citrulline; alternate" evidence="8">
    <location>
        <position position="18"/>
    </location>
</feature>
<feature type="modified residue" description="N6-(2-hydroxyisobutyryl)lysine; alternate" evidence="2">
    <location>
        <position position="19"/>
    </location>
</feature>
<feature type="modified residue" description="N6-acetyllysine; alternate" evidence="8">
    <location>
        <position position="19"/>
    </location>
</feature>
<feature type="modified residue" description="N6-butyryllysine; alternate" evidence="3">
    <location>
        <position position="19"/>
    </location>
</feature>
<feature type="modified residue" description="N6-crotonyllysine; alternate" evidence="8">
    <location>
        <position position="19"/>
    </location>
</feature>
<feature type="modified residue" description="N6-glutaryllysine; alternate" evidence="8">
    <location>
        <position position="19"/>
    </location>
</feature>
<feature type="modified residue" description="N6-lactoyllysine; alternate" evidence="8">
    <location>
        <position position="19"/>
    </location>
</feature>
<feature type="modified residue" description="N6-methyllysine; alternate" evidence="8">
    <location>
        <position position="19"/>
    </location>
</feature>
<feature type="modified residue" description="N6-(2-hydroxyisobutyryl)lysine; alternate" evidence="2">
    <location>
        <position position="24"/>
    </location>
</feature>
<feature type="modified residue" description="N6-acetyllysine; alternate" evidence="8">
    <location>
        <position position="24"/>
    </location>
</feature>
<feature type="modified residue" description="N6-butyryllysine; alternate" evidence="3">
    <location>
        <position position="24"/>
    </location>
</feature>
<feature type="modified residue" description="N6-crotonyllysine; alternate" evidence="8">
    <location>
        <position position="24"/>
    </location>
</feature>
<feature type="modified residue" description="N6-glutaryllysine; alternate" evidence="8">
    <location>
        <position position="24"/>
    </location>
</feature>
<feature type="modified residue" description="N6-lactoyllysine; alternate" evidence="8">
    <location>
        <position position="24"/>
    </location>
</feature>
<feature type="modified residue" description="N6-methyllysine; alternate" evidence="8">
    <location>
        <position position="24"/>
    </location>
</feature>
<feature type="modified residue" description="Citrulline" evidence="8">
    <location>
        <position position="27"/>
    </location>
</feature>
<feature type="modified residue" description="N6,N6,N6-trimethyllysine; alternate" evidence="8">
    <location>
        <position position="28"/>
    </location>
</feature>
<feature type="modified residue" description="N6,N6-dimethyllysine; alternate" evidence="8">
    <location>
        <position position="28"/>
    </location>
</feature>
<feature type="modified residue" description="N6-(2-hydroxyisobutyryl)lysine; alternate" evidence="2">
    <location>
        <position position="28"/>
    </location>
</feature>
<feature type="modified residue" description="N6-acetyllysine; alternate" evidence="8">
    <location>
        <position position="28"/>
    </location>
</feature>
<feature type="modified residue" description="N6-crotonyllysine; alternate" evidence="8">
    <location>
        <position position="28"/>
    </location>
</feature>
<feature type="modified residue" description="N6-glutaryllysine; alternate" evidence="8">
    <location>
        <position position="28"/>
    </location>
</feature>
<feature type="modified residue" description="N6-lactoyllysine; alternate" evidence="8">
    <location>
        <position position="28"/>
    </location>
</feature>
<feature type="modified residue" description="N6-methyllysine; alternate" evidence="8">
    <location>
        <position position="28"/>
    </location>
</feature>
<feature type="modified residue" description="ADP-ribosylserine; alternate" evidence="2">
    <location>
        <position position="29"/>
    </location>
</feature>
<feature type="modified residue" description="Phosphoserine; alternate; by AURKB, AURKC and RPS6KA5" evidence="8">
    <location>
        <position position="29"/>
    </location>
</feature>
<feature type="modified residue" description="N6,N6,N6-trimethyllysine; alternate" evidence="8">
    <location>
        <position position="37"/>
    </location>
</feature>
<feature type="modified residue" description="N6,N6-dimethyllysine; alternate" evidence="8">
    <location>
        <position position="37"/>
    </location>
</feature>
<feature type="modified residue" description="N6-(2-hydroxyisobutyryl)lysine; alternate" evidence="2">
    <location>
        <position position="37"/>
    </location>
</feature>
<feature type="modified residue" description="N6-acetyllysine; alternate" evidence="8">
    <location>
        <position position="37"/>
    </location>
</feature>
<feature type="modified residue" description="N6-methyllysine; alternate" evidence="8">
    <location>
        <position position="37"/>
    </location>
</feature>
<feature type="modified residue" description="N6-methyllysine" evidence="2">
    <location>
        <position position="38"/>
    </location>
</feature>
<feature type="modified residue" description="Phosphotyrosine" evidence="8">
    <location>
        <position position="42"/>
    </location>
</feature>
<feature type="modified residue" description="N6,N6,N6-trimethyllysine; alternate" evidence="8">
    <location>
        <position position="57"/>
    </location>
</feature>
<feature type="modified residue" description="N6-(2-hydroxyisobutyryl)lysine; alternate" evidence="2">
    <location>
        <position position="57"/>
    </location>
</feature>
<feature type="modified residue" description="N6-acetyllysine; alternate" evidence="8">
    <location>
        <position position="57"/>
    </location>
</feature>
<feature type="modified residue" description="N6-crotonyllysine; alternate" evidence="8">
    <location>
        <position position="57"/>
    </location>
</feature>
<feature type="modified residue" description="N6-glutaryllysine; alternate" evidence="8">
    <location>
        <position position="57"/>
    </location>
</feature>
<feature type="modified residue" description="N6-lactoyllysine; alternate" evidence="5">
    <location>
        <position position="57"/>
    </location>
</feature>
<feature type="modified residue" description="N6-methyllysine; by EHMT2; alternate" evidence="8">
    <location>
        <position position="57"/>
    </location>
</feature>
<feature type="modified residue" description="N6-succinyllysine; alternate" evidence="5">
    <location>
        <position position="57"/>
    </location>
</feature>
<feature type="modified residue" description="Phosphoserine" evidence="8">
    <location>
        <position position="58"/>
    </location>
</feature>
<feature type="modified residue" description="N6-(2-hydroxyisobutyryl)lysine; alternate" evidence="2">
    <location>
        <position position="65"/>
    </location>
</feature>
<feature type="modified residue" description="N6-methyllysine; alternate" evidence="8">
    <location>
        <position position="65"/>
    </location>
</feature>
<feature type="modified residue" description="N6,N6,N6-trimethyllysine; alternate" evidence="5">
    <location>
        <position position="80"/>
    </location>
</feature>
<feature type="modified residue" description="N6,N6-dimethyllysine; alternate" evidence="8">
    <location>
        <position position="80"/>
    </location>
</feature>
<feature type="modified residue" description="N6-(2-hydroxyisobutyryl)lysine; alternate" evidence="2">
    <location>
        <position position="80"/>
    </location>
</feature>
<feature type="modified residue" description="N6-acetyllysine; alternate" evidence="8">
    <location>
        <position position="80"/>
    </location>
</feature>
<feature type="modified residue" description="N6-glutaryllysine; alternate" evidence="8">
    <location>
        <position position="80"/>
    </location>
</feature>
<feature type="modified residue" description="N6-lactoyllysine; alternate" evidence="8">
    <location>
        <position position="80"/>
    </location>
</feature>
<feature type="modified residue" description="N6-methyllysine; alternate" evidence="8">
    <location>
        <position position="80"/>
    </location>
</feature>
<feature type="modified residue" description="N6-succinyllysine; alternate" evidence="5">
    <location>
        <position position="80"/>
    </location>
</feature>
<feature type="modified residue" description="Phosphothreonine" evidence="8">
    <location>
        <position position="81"/>
    </location>
</feature>
<feature type="modified residue" description="Phosphoserine" evidence="6">
    <location>
        <position position="87"/>
    </location>
</feature>
<feature type="modified residue" description="Phosphothreonine" evidence="8">
    <location>
        <position position="108"/>
    </location>
</feature>
<feature type="modified residue" description="N6-acetyllysine; alternate" evidence="8">
    <location>
        <position position="116"/>
    </location>
</feature>
<feature type="modified residue" description="N6-glutaryllysine; alternate" evidence="8">
    <location>
        <position position="116"/>
    </location>
</feature>
<feature type="modified residue" description="N6-(2-hydroxyisobutyryl)lysine; alternate" evidence="2">
    <location>
        <position position="123"/>
    </location>
</feature>
<feature type="modified residue" description="N6-acetyllysine; alternate" evidence="8">
    <location>
        <position position="123"/>
    </location>
</feature>
<feature type="modified residue" description="N6-glutaryllysine; alternate" evidence="8">
    <location>
        <position position="123"/>
    </location>
</feature>
<feature type="modified residue" description="N6-methyllysine; alternate" evidence="8">
    <location>
        <position position="123"/>
    </location>
</feature>
<feature type="modified residue" description="N6-succinyllysine; alternate" evidence="8">
    <location>
        <position position="123"/>
    </location>
</feature>
<feature type="lipid moiety-binding region" description="S-palmitoyl cysteine" evidence="8">
    <location>
        <position position="111"/>
    </location>
</feature>
<dbReference type="EMBL" id="X14732">
    <property type="protein sequence ID" value="CAA32855.1"/>
    <property type="molecule type" value="Genomic_DNA"/>
</dbReference>
<dbReference type="EMBL" id="X14732">
    <property type="protein sequence ID" value="CAA32856.1"/>
    <property type="molecule type" value="Genomic_DNA"/>
</dbReference>
<dbReference type="PIR" id="I50460">
    <property type="entry name" value="I50460"/>
</dbReference>
<dbReference type="SMR" id="P84230"/>
<dbReference type="Ensembl" id="ENSCMMT00000003041.1">
    <property type="protein sequence ID" value="ENSCMMP00000002710.1"/>
    <property type="gene ID" value="ENSCMMG00000001768.1"/>
</dbReference>
<dbReference type="Ensembl" id="ENSCMMT00000003084.1">
    <property type="protein sequence ID" value="ENSCMMP00000002751.1"/>
    <property type="gene ID" value="ENSCMMG00000001799.1"/>
</dbReference>
<dbReference type="Proteomes" id="UP000694556">
    <property type="component" value="Chromosome 1"/>
</dbReference>
<dbReference type="GO" id="GO:0000786">
    <property type="term" value="C:nucleosome"/>
    <property type="evidence" value="ECO:0007669"/>
    <property type="project" value="UniProtKB-KW"/>
</dbReference>
<dbReference type="GO" id="GO:0005634">
    <property type="term" value="C:nucleus"/>
    <property type="evidence" value="ECO:0007669"/>
    <property type="project" value="UniProtKB-SubCell"/>
</dbReference>
<dbReference type="GO" id="GO:0003677">
    <property type="term" value="F:DNA binding"/>
    <property type="evidence" value="ECO:0007669"/>
    <property type="project" value="UniProtKB-KW"/>
</dbReference>
<dbReference type="GO" id="GO:0046982">
    <property type="term" value="F:protein heterodimerization activity"/>
    <property type="evidence" value="ECO:0007669"/>
    <property type="project" value="InterPro"/>
</dbReference>
<dbReference type="GO" id="GO:0030527">
    <property type="term" value="F:structural constituent of chromatin"/>
    <property type="evidence" value="ECO:0007669"/>
    <property type="project" value="InterPro"/>
</dbReference>
<dbReference type="CDD" id="cd22911">
    <property type="entry name" value="HFD_H3"/>
    <property type="match status" value="1"/>
</dbReference>
<dbReference type="FunFam" id="1.10.20.10:FF:000078">
    <property type="entry name" value="Histone H3"/>
    <property type="match status" value="1"/>
</dbReference>
<dbReference type="FunFam" id="1.10.20.10:FF:000044">
    <property type="entry name" value="Histone H3.3"/>
    <property type="match status" value="1"/>
</dbReference>
<dbReference type="Gene3D" id="1.10.20.10">
    <property type="entry name" value="Histone, subunit A"/>
    <property type="match status" value="1"/>
</dbReference>
<dbReference type="InterPro" id="IPR009072">
    <property type="entry name" value="Histone-fold"/>
</dbReference>
<dbReference type="InterPro" id="IPR007125">
    <property type="entry name" value="Histone_H2A/H2B/H3"/>
</dbReference>
<dbReference type="InterPro" id="IPR000164">
    <property type="entry name" value="Histone_H3/CENP-A"/>
</dbReference>
<dbReference type="PANTHER" id="PTHR11426">
    <property type="entry name" value="HISTONE H3"/>
    <property type="match status" value="1"/>
</dbReference>
<dbReference type="Pfam" id="PF00125">
    <property type="entry name" value="Histone"/>
    <property type="match status" value="1"/>
</dbReference>
<dbReference type="PRINTS" id="PR00622">
    <property type="entry name" value="HISTONEH3"/>
</dbReference>
<dbReference type="SMART" id="SM00428">
    <property type="entry name" value="H3"/>
    <property type="match status" value="1"/>
</dbReference>
<dbReference type="SUPFAM" id="SSF47113">
    <property type="entry name" value="Histone-fold"/>
    <property type="match status" value="1"/>
</dbReference>
<dbReference type="PROSITE" id="PS00322">
    <property type="entry name" value="HISTONE_H3_1"/>
    <property type="match status" value="1"/>
</dbReference>
<dbReference type="PROSITE" id="PS00959">
    <property type="entry name" value="HISTONE_H3_2"/>
    <property type="match status" value="1"/>
</dbReference>
<comment type="function">
    <text>Core component of nucleosome. Nucleosomes wrap and compact DNA into chromatin, limiting DNA accessibility to the cellular machineries which require DNA as a template. Histones thereby play a central role in transcription regulation, DNA repair, DNA replication and chromosomal stability. DNA accessibility is regulated via a complex set of post-translational modifications of histones, also called histone code, and nucleosome remodeling.</text>
</comment>
<comment type="subunit">
    <text>The nucleosome is a histone octamer containing two molecules each of H2A, H2B, H3 and H4 assembled in one H3-H4 heterotetramer and two H2A-H2B heterodimers. The octamer wraps approximately 147 bp of DNA.</text>
</comment>
<comment type="subcellular location">
    <subcellularLocation>
        <location>Nucleus</location>
    </subcellularLocation>
    <subcellularLocation>
        <location>Chromosome</location>
    </subcellularLocation>
</comment>
<comment type="developmental stage">
    <text>Expressed during S phase, then expression strongly decreases as cell division slows down during the process of differentiation.</text>
</comment>
<comment type="PTM">
    <text evidence="8">Acetylation is generally linked to gene activation. Acetylation on Lys-19 (H3K18ac) and Lys-24 (H3K24ac) favors methylation at Arg-18 (H3R17me). Acetylation at Lys-123 (H3K122ac) by EP300/p300 plays a central role in chromatin structure: localizes at the surface of the histone octamer and stimulates transcription, possibly by promoting nucleosome instability (By similarity).</text>
</comment>
<comment type="PTM">
    <text evidence="8">Asymmetric dimethylation at Arg-18 (H3R17me2a) is linked to gene activation. Asymmetric dimethylation at Arg-3 (H3R2me2a) by PRMT6 is linked to gene repression and is mutually exclusive with H3 Lys-5 methylation (H3K4me2 and H3K4me3). H3R2me2a is present at the 3' of genes regardless of their transcription state and is enriched on inactive promoters, while it is absent on active promoters (By similarity).</text>
</comment>
<comment type="PTM">
    <text evidence="8">Methylation at Lys-5 (H3K4me), Lys-37 (H3K36me) and Lys-80 (H3K79me) are linked to gene activation. Methylation at Lys-5 (H3K4me) facilitates subsequent acetylation of H3 and H4. Methylation at Lys-80 (H3K79me) is associated with DNA double-strand break (DSB) responses and is a specific target for TP53BP1. Methylation at Lys-10 (H3K9me) and Lys-28 (H3K27me) are linked to gene repression. Methylation at Lys-10 (H3K9me) is a specific target for HP1 proteins (CBX1, CBX3 and CBX5) and prevents subsequent phosphorylation at Ser-11 (H3S10ph) and acetylation of H3 and H4. Methylation at Lys-5 (H3K4me) and Lys-80 (H3K79me) require preliminary monoubiquitination of H2B at 'Lys-120' (By similarity).</text>
</comment>
<comment type="PTM">
    <text evidence="8">Phosphorylated at Thr-4 (H3T3ph) by VRK1 (By similarity). Phosphorylated at Thr-4 (H3T3ph) by HASPIN during prophase and dephosphorylated during anaphase. Phosphorylation at Ser-11 (H3S10ph) by AURKB is crucial for chromosome condensation and cell-cycle progression during mitosis and meiosis. In addition phosphorylation at Ser-11 (H3S10ph) by RPS6KA4 and RPS6KA5 is important during interphase because it enables the transcription of genes following external stimulation, like mitogens, stress, growth factors or UV irradiation and result in the activation of genes, such as c-fos and c-jun. Phosphorylation at Ser-11 (H3S10ph), which is linked to gene activation, prevents methylation at Lys-10 (H3K9me) but facilitates acetylation of H3 and H4. Phosphorylation at Ser-11 (H3S10ph) by AURKB mediates the dissociation of HP1 proteins (CBX1, CBX3 and CBX5) from heterochromatin. Phosphorylation at Ser-11 (H3S10ph) is also an essential regulatory mechanism for neoplastic cell transformation. Phosphorylated at Ser-29 (H3S28ph) by MAP3K20 isoform 1, RPS6KA5 or AURKB during mitosis or upon ultraviolet B irradiation. Phosphorylation at Thr-7 (H3T6ph) by PRKCB is a specific tag for epigenetic transcriptional activation that prevents demethylation of Lys-5 (H3K4me) by LSD1/KDM1A. At centromeres, specifically phosphorylated at Thr-12 (H3T11ph) from prophase to early anaphase, by DAPK3 and PKN1. Phosphorylation at Thr-12 (H3T11ph) by PKN1 or isoform M2 of PKM (PKM2) is a specific tag for epigenetic transcriptional activation that promotes demethylation of Lys-10 (H3K9me) by KDM4C/JMJD2C. Phosphorylation at Tyr-42 (H3Y41ph) by JAK2 promotes exclusion of CBX5 (HP1 alpha) from chromatin (By similarity).</text>
</comment>
<comment type="PTM">
    <text evidence="8">Monoubiquitinated by RAG1 in lymphoid cells, monoubiquitination is required for V(D)J recombination.</text>
</comment>
<comment type="PTM">
    <text evidence="8">Lysine deamination at Lys-5 (H3K4all) to form allysine only takes place on H3K4me3 and results in gene repression.</text>
</comment>
<comment type="PTM">
    <text evidence="3">Butyrylation of histones marks active promoters and competes with histone acetylation. It is present during late spermatogenesis.</text>
</comment>
<comment type="PTM">
    <text evidence="8">Succinylation at Lys-80 (H3K79succ) by KAT2A takes place with a maximum frequency around the transcription start sites of genes. It gives a specific tag for epigenetic transcription activation. Desuccinylation at Lys-123 (H3K122succ) by SIRT7 in response to DNA damage promotes chromatin condensation and double-strand breaks (DSBs) repair.</text>
</comment>
<comment type="PTM">
    <text evidence="2">Serine ADP-ribosylation by PARP1 or PARP2 constitutes the primary form of ADP-ribosylation of proteins in response to DNA damage. Serine ADP-ribosylation at Ser-11 (H3S10ADPr) promotes recruitment of CHD1L. H3S10ADPr is mutually exclusive with phosphorylation at Ser-11 (H3S10ph) and impairs acetylation at Lys-10 (H3K9ac).</text>
</comment>
<comment type="PTM">
    <text evidence="8">Serotonylated by TGM2 at Gln-6 (H3Q5ser) during serotonergic neuron differentiation (By similarity). H3Q5ser is associated with trimethylation of Lys-5 (H3K4me3) and enhances general transcription factor IID (TFIID) complex-binding to H3K4me3, thereby facilitating transcription (By similarity).</text>
</comment>
<comment type="PTM">
    <text evidence="7 8">Dopaminylated by TGM2 at Gln-6 (H3Q5dop) in ventral tegmental area (VTA) neurons (By similarity). H3Q5dop mediates neurotransmission-independent role of nuclear dopamine by regulating relapse-related transcriptional plasticity in the reward system (By similarity).</text>
</comment>
<comment type="PTM">
    <text evidence="8">Lactylated in macrophages by EP300/P300 by using lactoyl-CoA directly derived from endogenous or exogenous lactate, leading to stimulates gene transcription.</text>
</comment>
<comment type="similarity">
    <text evidence="10">Belongs to the histone H3 family.</text>
</comment>
<name>H32_CAIMO</name>
<organism>
    <name type="scientific">Cairina moschata</name>
    <name type="common">Muscovy duck</name>
    <dbReference type="NCBI Taxonomy" id="8855"/>
    <lineage>
        <taxon>Eukaryota</taxon>
        <taxon>Metazoa</taxon>
        <taxon>Chordata</taxon>
        <taxon>Craniata</taxon>
        <taxon>Vertebrata</taxon>
        <taxon>Euteleostomi</taxon>
        <taxon>Archelosauria</taxon>
        <taxon>Archosauria</taxon>
        <taxon>Dinosauria</taxon>
        <taxon>Saurischia</taxon>
        <taxon>Theropoda</taxon>
        <taxon>Coelurosauria</taxon>
        <taxon>Aves</taxon>
        <taxon>Neognathae</taxon>
        <taxon>Galloanserae</taxon>
        <taxon>Anseriformes</taxon>
        <taxon>Anatidae</taxon>
        <taxon>Anatinae</taxon>
        <taxon>Cairina</taxon>
    </lineage>
</organism>
<protein>
    <recommendedName>
        <fullName>Histone H3.2</fullName>
    </recommendedName>
</protein>
<keyword id="KW-0007">Acetylation</keyword>
<keyword id="KW-0013">ADP-ribosylation</keyword>
<keyword id="KW-0158">Chromosome</keyword>
<keyword id="KW-0164">Citrullination</keyword>
<keyword id="KW-0238">DNA-binding</keyword>
<keyword id="KW-0379">Hydroxylation</keyword>
<keyword id="KW-0449">Lipoprotein</keyword>
<keyword id="KW-0488">Methylation</keyword>
<keyword id="KW-0544">Nucleosome core</keyword>
<keyword id="KW-0539">Nucleus</keyword>
<keyword id="KW-0564">Palmitate</keyword>
<keyword id="KW-0597">Phosphoprotein</keyword>
<keyword id="KW-1185">Reference proteome</keyword>
<keyword id="KW-0832">Ubl conjugation</keyword>
<reference key="1">
    <citation type="journal article" date="1989" name="J. Mol. Evol.">
        <title>Conserved organization of an avian histone gene cluster with inverted duplications of H3 and H4 genes.</title>
        <authorList>
            <person name="Toenjes R."/>
            <person name="Munk K."/>
            <person name="Doenecke D."/>
        </authorList>
    </citation>
    <scope>NUCLEOTIDE SEQUENCE [GENOMIC DNA]</scope>
</reference>